<gene>
    <name type="primary">fdtA</name>
</gene>
<evidence type="ECO:0000269" key="1">
    <source>
    </source>
</evidence>
<evidence type="ECO:0000269" key="2">
    <source>
    </source>
</evidence>
<evidence type="ECO:0000305" key="3">
    <source>
    </source>
</evidence>
<evidence type="ECO:0007829" key="4">
    <source>
        <dbReference type="PDB" id="2PA7"/>
    </source>
</evidence>
<proteinExistence type="evidence at protein level"/>
<feature type="chain" id="PRO_0000421823" description="TDP-4-oxo-6-deoxy-alpha-D-glucose-3,4-oxoisomerase">
    <location>
        <begin position="1"/>
        <end position="139"/>
    </location>
</feature>
<feature type="active site" description="Proton acceptor" evidence="3">
    <location>
        <position position="49"/>
    </location>
</feature>
<feature type="mutagenesis site" description="Loss of catalytic activity." evidence="2">
    <original>H</original>
    <variation>N</variation>
    <location>
        <position position="49"/>
    </location>
</feature>
<feature type="mutagenesis site" description="Retains some catalytic activity." evidence="2">
    <original>H</original>
    <variation>N</variation>
    <location>
        <position position="51"/>
    </location>
</feature>
<feature type="strand" evidence="4">
    <location>
        <begin position="4"/>
        <end position="7"/>
    </location>
</feature>
<feature type="strand" evidence="4">
    <location>
        <begin position="10"/>
        <end position="13"/>
    </location>
</feature>
<feature type="strand" evidence="4">
    <location>
        <begin position="16"/>
        <end position="22"/>
    </location>
</feature>
<feature type="turn" evidence="4">
    <location>
        <begin position="23"/>
        <end position="25"/>
    </location>
</feature>
<feature type="strand" evidence="4">
    <location>
        <begin position="26"/>
        <end position="29"/>
    </location>
</feature>
<feature type="strand" evidence="4">
    <location>
        <begin position="33"/>
        <end position="39"/>
    </location>
</feature>
<feature type="strand" evidence="4">
    <location>
        <begin position="46"/>
        <end position="53"/>
    </location>
</feature>
<feature type="strand" evidence="4">
    <location>
        <begin position="56"/>
        <end position="63"/>
    </location>
</feature>
<feature type="strand" evidence="4">
    <location>
        <begin position="65"/>
        <end position="70"/>
    </location>
</feature>
<feature type="strand" evidence="4">
    <location>
        <begin position="75"/>
        <end position="80"/>
    </location>
</feature>
<feature type="strand" evidence="4">
    <location>
        <begin position="85"/>
        <end position="89"/>
    </location>
</feature>
<feature type="strand" evidence="4">
    <location>
        <begin position="94"/>
        <end position="98"/>
    </location>
</feature>
<feature type="strand" evidence="4">
    <location>
        <begin position="105"/>
        <end position="112"/>
    </location>
</feature>
<feature type="helix" evidence="4">
    <location>
        <begin position="116"/>
        <end position="118"/>
    </location>
</feature>
<feature type="helix" evidence="4">
    <location>
        <begin position="123"/>
        <end position="135"/>
    </location>
</feature>
<accession>Q6T1W8</accession>
<comment type="function">
    <text evidence="1 2">Mediates the isomerization of dTDP-6-deoxy-D-xylohex-4-ulose into dTDP-6-deoxy-D-xylohex-3-ulose in the biosynthesis of dTDP-3-acetamido-3,6-dideoxy-alpha-D-galactose, a glycan chain of the S-layer.</text>
</comment>
<comment type="catalytic activity">
    <reaction evidence="1 2">
        <text>dTDP-4-dehydro-6-deoxy-alpha-D-glucose = dTDP-3-dehydro-6-deoxy-alpha-D-galactose</text>
        <dbReference type="Rhea" id="RHEA:31835"/>
        <dbReference type="ChEBI" id="CHEBI:57649"/>
        <dbReference type="ChEBI" id="CHEBI:63303"/>
        <dbReference type="EC" id="5.3.2.3"/>
    </reaction>
</comment>
<comment type="subunit">
    <text evidence="2">Homodimer.</text>
</comment>
<keyword id="KW-0002">3D-structure</keyword>
<keyword id="KW-0413">Isomerase</keyword>
<protein>
    <recommendedName>
        <fullName>TDP-4-oxo-6-deoxy-alpha-D-glucose-3,4-oxoisomerase</fullName>
        <ecNumber>5.3.2.3</ecNumber>
    </recommendedName>
    <alternativeName>
        <fullName>dTDP-6-deoxy-3,4-keto-hexulose isomerase</fullName>
    </alternativeName>
</protein>
<sequence>MENKVINFKKIIDSRGSLVAIEENKNIPFSIKRVYYIFDTKGEEPRGFHAHKKLEQVLVCLNGSCRVILDDGNIIQEITLDSPAVGLYVGPAVWHEMHDFSSDCVMMVLASDYYDETDYIRQYDNFKKYIAKINLEKEG</sequence>
<dbReference type="EC" id="5.3.2.3"/>
<dbReference type="EMBL" id="AY442352">
    <property type="protein sequence ID" value="AAS55720.1"/>
    <property type="molecule type" value="Genomic_DNA"/>
</dbReference>
<dbReference type="RefSeq" id="WP_091261033.1">
    <property type="nucleotide sequence ID" value="NZ_FNDE01000034.1"/>
</dbReference>
<dbReference type="PDB" id="2PA7">
    <property type="method" value="X-ray"/>
    <property type="resolution" value="1.50 A"/>
    <property type="chains" value="A/B=1-139"/>
</dbReference>
<dbReference type="PDB" id="2PAE">
    <property type="method" value="X-ray"/>
    <property type="resolution" value="2.50 A"/>
    <property type="chains" value="A/B=1-139"/>
</dbReference>
<dbReference type="PDB" id="2PAK">
    <property type="method" value="X-ray"/>
    <property type="resolution" value="2.40 A"/>
    <property type="chains" value="A/B=1-139"/>
</dbReference>
<dbReference type="PDB" id="2PAM">
    <property type="method" value="X-ray"/>
    <property type="resolution" value="2.50 A"/>
    <property type="chains" value="A/B=1-139"/>
</dbReference>
<dbReference type="PDBsum" id="2PA7"/>
<dbReference type="PDBsum" id="2PAE"/>
<dbReference type="PDBsum" id="2PAK"/>
<dbReference type="PDBsum" id="2PAM"/>
<dbReference type="SMR" id="Q6T1W8"/>
<dbReference type="KEGG" id="ag:AAS55720"/>
<dbReference type="OrthoDB" id="9795513at2"/>
<dbReference type="BioCyc" id="MetaCyc:MONOMER-17003"/>
<dbReference type="BRENDA" id="5.3.2.3">
    <property type="organism ID" value="344"/>
</dbReference>
<dbReference type="EvolutionaryTrace" id="Q6T1W8"/>
<dbReference type="GO" id="GO:0016853">
    <property type="term" value="F:isomerase activity"/>
    <property type="evidence" value="ECO:0007669"/>
    <property type="project" value="UniProtKB-KW"/>
</dbReference>
<dbReference type="CDD" id="cd20292">
    <property type="entry name" value="cupin_QdtA-like"/>
    <property type="match status" value="1"/>
</dbReference>
<dbReference type="Gene3D" id="2.60.120.10">
    <property type="entry name" value="Jelly Rolls"/>
    <property type="match status" value="1"/>
</dbReference>
<dbReference type="InterPro" id="IPR008894">
    <property type="entry name" value="QdtA_cupin_dom"/>
</dbReference>
<dbReference type="InterPro" id="IPR014710">
    <property type="entry name" value="RmlC-like_jellyroll"/>
</dbReference>
<dbReference type="InterPro" id="IPR011051">
    <property type="entry name" value="RmlC_Cupin_sf"/>
</dbReference>
<dbReference type="Pfam" id="PF05523">
    <property type="entry name" value="FdtA"/>
    <property type="match status" value="1"/>
</dbReference>
<dbReference type="SUPFAM" id="SSF51182">
    <property type="entry name" value="RmlC-like cupins"/>
    <property type="match status" value="1"/>
</dbReference>
<name>FDTA_ANETH</name>
<reference key="1">
    <citation type="journal article" date="2003" name="J. Biol. Chem.">
        <title>Biosynthesis of dTDP-3-acetamido-3,6-dideoxy-alpha-D-galactose in Aneurinibacillus thermoaerophilus L420-91T.</title>
        <authorList>
            <person name="Pfoestl A."/>
            <person name="Hofinger A."/>
            <person name="Kosma P."/>
            <person name="Messner P."/>
        </authorList>
    </citation>
    <scope>NUCLEOTIDE SEQUENCE [GENOMIC DNA]</scope>
    <scope>FUNCTION</scope>
    <scope>CATALYTIC ACTIVITY</scope>
    <source>
        <strain>L420-91T</strain>
    </source>
</reference>
<reference key="2">
    <citation type="journal article" date="2007" name="J. Biol. Chem.">
        <title>The x-ray structure of dTDP-4-keto-6-deoxy-D-glucose-3,4-ketoisomerase.</title>
        <authorList>
            <person name="Davis M.L."/>
            <person name="Thoden J.B."/>
            <person name="Holden H.M."/>
        </authorList>
    </citation>
    <scope>X-RAY CRYSTALLOGRAPHY (1.50 ANGSTROMS)</scope>
    <scope>SUBUNIT</scope>
    <scope>ACTIVE SITE</scope>
    <scope>FUNCTION</scope>
    <scope>CATALYTIC ACTIVITY</scope>
    <scope>MUTAGENESIS OF HIS-49 AND HIS-51</scope>
</reference>
<organism>
    <name type="scientific">Aneurinibacillus thermoaerophilus</name>
    <dbReference type="NCBI Taxonomy" id="143495"/>
    <lineage>
        <taxon>Bacteria</taxon>
        <taxon>Bacillati</taxon>
        <taxon>Bacillota</taxon>
        <taxon>Bacilli</taxon>
        <taxon>Bacillales</taxon>
        <taxon>Paenibacillaceae</taxon>
        <taxon>Aneurinibacillus group</taxon>
        <taxon>Aneurinibacillus</taxon>
    </lineage>
</organism>